<gene>
    <name type="primary">hoxc5a</name>
</gene>
<proteinExistence type="inferred from homology"/>
<keyword id="KW-0217">Developmental protein</keyword>
<keyword id="KW-0238">DNA-binding</keyword>
<keyword id="KW-0371">Homeobox</keyword>
<keyword id="KW-0539">Nucleus</keyword>
<keyword id="KW-1185">Reference proteome</keyword>
<keyword id="KW-0804">Transcription</keyword>
<keyword id="KW-0805">Transcription regulation</keyword>
<feature type="chain" id="PRO_0000265987" description="Homeobox protein Hox-C5a">
    <location>
        <begin position="1"/>
        <end position="205"/>
    </location>
</feature>
<feature type="DNA-binding region" description="Homeobox" evidence="2">
    <location>
        <begin position="140"/>
        <end position="199"/>
    </location>
</feature>
<feature type="region of interest" description="Disordered" evidence="3">
    <location>
        <begin position="75"/>
        <end position="123"/>
    </location>
</feature>
<feature type="short sequence motif" description="Antp-type hexapeptide">
    <location>
        <begin position="125"/>
        <end position="130"/>
    </location>
</feature>
<feature type="compositionally biased region" description="Polar residues" evidence="3">
    <location>
        <begin position="102"/>
        <end position="113"/>
    </location>
</feature>
<accession>Q1KKU7</accession>
<dbReference type="EMBL" id="DQ481667">
    <property type="protein sequence ID" value="ABF22447.1"/>
    <property type="molecule type" value="Genomic_DNA"/>
</dbReference>
<dbReference type="SMR" id="Q1KKU7"/>
<dbReference type="FunCoup" id="Q1KKU7">
    <property type="interactions" value="128"/>
</dbReference>
<dbReference type="STRING" id="31033.ENSTRUP00000008518"/>
<dbReference type="GeneID" id="101078069"/>
<dbReference type="KEGG" id="tru:101078069"/>
<dbReference type="CTD" id="30379"/>
<dbReference type="eggNOG" id="KOG0489">
    <property type="taxonomic scope" value="Eukaryota"/>
</dbReference>
<dbReference type="HOGENOM" id="CLU_061398_2_1_1"/>
<dbReference type="InParanoid" id="Q1KKU7"/>
<dbReference type="OMA" id="TSPNTMF"/>
<dbReference type="OrthoDB" id="6159439at2759"/>
<dbReference type="Proteomes" id="UP000005226">
    <property type="component" value="Unplaced"/>
</dbReference>
<dbReference type="GO" id="GO:0005654">
    <property type="term" value="C:nucleoplasm"/>
    <property type="evidence" value="ECO:0007669"/>
    <property type="project" value="TreeGrafter"/>
</dbReference>
<dbReference type="GO" id="GO:0000981">
    <property type="term" value="F:DNA-binding transcription factor activity, RNA polymerase II-specific"/>
    <property type="evidence" value="ECO:0007669"/>
    <property type="project" value="InterPro"/>
</dbReference>
<dbReference type="GO" id="GO:0000978">
    <property type="term" value="F:RNA polymerase II cis-regulatory region sequence-specific DNA binding"/>
    <property type="evidence" value="ECO:0007669"/>
    <property type="project" value="TreeGrafter"/>
</dbReference>
<dbReference type="GO" id="GO:0009952">
    <property type="term" value="P:anterior/posterior pattern specification"/>
    <property type="evidence" value="ECO:0007669"/>
    <property type="project" value="TreeGrafter"/>
</dbReference>
<dbReference type="GO" id="GO:0048704">
    <property type="term" value="P:embryonic skeletal system morphogenesis"/>
    <property type="evidence" value="ECO:0007669"/>
    <property type="project" value="TreeGrafter"/>
</dbReference>
<dbReference type="GO" id="GO:0045944">
    <property type="term" value="P:positive regulation of transcription by RNA polymerase II"/>
    <property type="evidence" value="ECO:0007669"/>
    <property type="project" value="TreeGrafter"/>
</dbReference>
<dbReference type="CDD" id="cd00086">
    <property type="entry name" value="homeodomain"/>
    <property type="match status" value="1"/>
</dbReference>
<dbReference type="FunFam" id="1.10.10.60:FF:000055">
    <property type="entry name" value="Homeobox protein Hox-A5"/>
    <property type="match status" value="1"/>
</dbReference>
<dbReference type="Gene3D" id="1.10.10.60">
    <property type="entry name" value="Homeodomain-like"/>
    <property type="match status" value="1"/>
</dbReference>
<dbReference type="InterPro" id="IPR050609">
    <property type="entry name" value="Antp_homeobox_Deformed_sf"/>
</dbReference>
<dbReference type="InterPro" id="IPR001356">
    <property type="entry name" value="HD"/>
</dbReference>
<dbReference type="InterPro" id="IPR020479">
    <property type="entry name" value="HD_metazoa"/>
</dbReference>
<dbReference type="InterPro" id="IPR017995">
    <property type="entry name" value="Homeobox_antennapedia"/>
</dbReference>
<dbReference type="InterPro" id="IPR001827">
    <property type="entry name" value="Homeobox_Antennapedia_CS"/>
</dbReference>
<dbReference type="InterPro" id="IPR017970">
    <property type="entry name" value="Homeobox_CS"/>
</dbReference>
<dbReference type="InterPro" id="IPR009057">
    <property type="entry name" value="Homeodomain-like_sf"/>
</dbReference>
<dbReference type="PANTHER" id="PTHR45771:SF13">
    <property type="entry name" value="HOMEOBOX C5"/>
    <property type="match status" value="1"/>
</dbReference>
<dbReference type="PANTHER" id="PTHR45771">
    <property type="entry name" value="HOMEOTIC PROTEIN DEFORMED"/>
    <property type="match status" value="1"/>
</dbReference>
<dbReference type="Pfam" id="PF00046">
    <property type="entry name" value="Homeodomain"/>
    <property type="match status" value="1"/>
</dbReference>
<dbReference type="PRINTS" id="PR00025">
    <property type="entry name" value="ANTENNAPEDIA"/>
</dbReference>
<dbReference type="PRINTS" id="PR00024">
    <property type="entry name" value="HOMEOBOX"/>
</dbReference>
<dbReference type="SMART" id="SM00389">
    <property type="entry name" value="HOX"/>
    <property type="match status" value="1"/>
</dbReference>
<dbReference type="SUPFAM" id="SSF46689">
    <property type="entry name" value="Homeodomain-like"/>
    <property type="match status" value="1"/>
</dbReference>
<dbReference type="PROSITE" id="PS00032">
    <property type="entry name" value="ANTENNAPEDIA"/>
    <property type="match status" value="1"/>
</dbReference>
<dbReference type="PROSITE" id="PS00027">
    <property type="entry name" value="HOMEOBOX_1"/>
    <property type="match status" value="1"/>
</dbReference>
<dbReference type="PROSITE" id="PS50071">
    <property type="entry name" value="HOMEOBOX_2"/>
    <property type="match status" value="1"/>
</dbReference>
<organism>
    <name type="scientific">Takifugu rubripes</name>
    <name type="common">Japanese pufferfish</name>
    <name type="synonym">Fugu rubripes</name>
    <dbReference type="NCBI Taxonomy" id="31033"/>
    <lineage>
        <taxon>Eukaryota</taxon>
        <taxon>Metazoa</taxon>
        <taxon>Chordata</taxon>
        <taxon>Craniata</taxon>
        <taxon>Vertebrata</taxon>
        <taxon>Euteleostomi</taxon>
        <taxon>Actinopterygii</taxon>
        <taxon>Neopterygii</taxon>
        <taxon>Teleostei</taxon>
        <taxon>Neoteleostei</taxon>
        <taxon>Acanthomorphata</taxon>
        <taxon>Eupercaria</taxon>
        <taxon>Tetraodontiformes</taxon>
        <taxon>Tetradontoidea</taxon>
        <taxon>Tetraodontidae</taxon>
        <taxon>Takifugu</taxon>
    </lineage>
</organism>
<reference key="1">
    <citation type="journal article" date="2006" name="Proc. Natl. Acad. Sci. U.S.A.">
        <title>Highly conserved syntenic blocks at the vertebrate Hox loci and conserved regulatory elements within and outside Hox gene clusters.</title>
        <authorList>
            <person name="Lee A.P."/>
            <person name="Koh E.G.L."/>
            <person name="Tay A."/>
            <person name="Brenner S."/>
            <person name="Venkatesh B."/>
        </authorList>
    </citation>
    <scope>NUCLEOTIDE SEQUENCE [GENOMIC DNA]</scope>
</reference>
<name>HXC5A_TAKRU</name>
<comment type="function">
    <text evidence="1">Sequence-specific transcription factor which is part of a developmental regulatory system that provides cells with specific positional identities on the anterior-posterior axis.</text>
</comment>
<comment type="subcellular location">
    <subcellularLocation>
        <location evidence="2">Nucleus</location>
    </subcellularLocation>
</comment>
<comment type="similarity">
    <text evidence="4">Belongs to the Antp homeobox family.</text>
</comment>
<evidence type="ECO:0000250" key="1"/>
<evidence type="ECO:0000255" key="2">
    <source>
        <dbReference type="PROSITE-ProRule" id="PRU00108"/>
    </source>
</evidence>
<evidence type="ECO:0000256" key="3">
    <source>
        <dbReference type="SAM" id="MobiDB-lite"/>
    </source>
</evidence>
<evidence type="ECO:0000305" key="4"/>
<protein>
    <recommendedName>
        <fullName>Homeobox protein Hox-C5a</fullName>
    </recommendedName>
</protein>
<sequence>MFSFDLSERRSGRYEGVNGIFTCPVPTTSTKREEMKTSLRGSAETLLPSGPQITMVSSSTTVDASGLSYGGNTLLGLGADRDPERSAKLGGNKSQESERSAENAQTVKRNPQVTERPDSEQQPQIYPWMTKLHMNHESEGKRSRTSYTRYQTLELEKEFHFNRYLSRRRRIEIAHNLCLNERQIKIWFQNRRMKWKKDSKIKVKE</sequence>